<reference key="1">
    <citation type="journal article" date="2007" name="PLoS Genet.">
        <title>Meningococcal genetic variation mechanisms viewed through comparative analysis of serogroup C strain FAM18.</title>
        <authorList>
            <person name="Bentley S.D."/>
            <person name="Vernikos G.S."/>
            <person name="Snyder L.A.S."/>
            <person name="Churcher C."/>
            <person name="Arrowsmith C."/>
            <person name="Chillingworth T."/>
            <person name="Cronin A."/>
            <person name="Davis P.H."/>
            <person name="Holroyd N.E."/>
            <person name="Jagels K."/>
            <person name="Maddison M."/>
            <person name="Moule S."/>
            <person name="Rabbinowitsch E."/>
            <person name="Sharp S."/>
            <person name="Unwin L."/>
            <person name="Whitehead S."/>
            <person name="Quail M.A."/>
            <person name="Achtman M."/>
            <person name="Barrell B.G."/>
            <person name="Saunders N.J."/>
            <person name="Parkhill J."/>
        </authorList>
    </citation>
    <scope>NUCLEOTIDE SEQUENCE [LARGE SCALE GENOMIC DNA]</scope>
    <source>
        <strain>ATCC 700532 / DSM 15464 / FAM18</strain>
    </source>
</reference>
<feature type="chain" id="PRO_1000017309" description="Biosynthetic peptidoglycan transglycosylase">
    <location>
        <begin position="1"/>
        <end position="233"/>
    </location>
</feature>
<feature type="transmembrane region" description="Helical" evidence="1">
    <location>
        <begin position="8"/>
        <end position="28"/>
    </location>
</feature>
<comment type="function">
    <text evidence="1">Peptidoglycan polymerase that catalyzes glycan chain elongation from lipid-linked precursors.</text>
</comment>
<comment type="catalytic activity">
    <reaction evidence="1">
        <text>[GlcNAc-(1-&gt;4)-Mur2Ac(oyl-L-Ala-gamma-D-Glu-L-Lys-D-Ala-D-Ala)](n)-di-trans,octa-cis-undecaprenyl diphosphate + beta-D-GlcNAc-(1-&gt;4)-Mur2Ac(oyl-L-Ala-gamma-D-Glu-L-Lys-D-Ala-D-Ala)-di-trans,octa-cis-undecaprenyl diphosphate = [GlcNAc-(1-&gt;4)-Mur2Ac(oyl-L-Ala-gamma-D-Glu-L-Lys-D-Ala-D-Ala)](n+1)-di-trans,octa-cis-undecaprenyl diphosphate + di-trans,octa-cis-undecaprenyl diphosphate + H(+)</text>
        <dbReference type="Rhea" id="RHEA:23708"/>
        <dbReference type="Rhea" id="RHEA-COMP:9602"/>
        <dbReference type="Rhea" id="RHEA-COMP:9603"/>
        <dbReference type="ChEBI" id="CHEBI:15378"/>
        <dbReference type="ChEBI" id="CHEBI:58405"/>
        <dbReference type="ChEBI" id="CHEBI:60033"/>
        <dbReference type="ChEBI" id="CHEBI:78435"/>
        <dbReference type="EC" id="2.4.99.28"/>
    </reaction>
</comment>
<comment type="pathway">
    <text evidence="1">Cell wall biogenesis; peptidoglycan biosynthesis.</text>
</comment>
<comment type="subcellular location">
    <subcellularLocation>
        <location evidence="1">Cell inner membrane</location>
        <topology evidence="1">Single-pass membrane protein</topology>
    </subcellularLocation>
</comment>
<comment type="similarity">
    <text evidence="1">Belongs to the glycosyltransferase 51 family.</text>
</comment>
<proteinExistence type="inferred from homology"/>
<gene>
    <name evidence="1" type="primary">mtgA</name>
    <name type="ordered locus">NMC1811</name>
</gene>
<keyword id="KW-0997">Cell inner membrane</keyword>
<keyword id="KW-1003">Cell membrane</keyword>
<keyword id="KW-0133">Cell shape</keyword>
<keyword id="KW-0961">Cell wall biogenesis/degradation</keyword>
<keyword id="KW-0328">Glycosyltransferase</keyword>
<keyword id="KW-0472">Membrane</keyword>
<keyword id="KW-0573">Peptidoglycan synthesis</keyword>
<keyword id="KW-0808">Transferase</keyword>
<keyword id="KW-0812">Transmembrane</keyword>
<keyword id="KW-1133">Transmembrane helix</keyword>
<evidence type="ECO:0000255" key="1">
    <source>
        <dbReference type="HAMAP-Rule" id="MF_00766"/>
    </source>
</evidence>
<sequence>MFRIVKWLIALPVGIFIFFNAYVYGNIITYRAVAPHRTAFMSMRMKQFEQEGRDVALDYRWVPYNRISVNLKKALIASEDAHFAGHGGFDWGGIQNAIRRNRNSGKVKAGGSTISQQLAKNLFLNESRSYIRKGEEAAITAMMEAVTDKDRIFELYLNSIEWHYGVFGAEAASRYFYQIPAAKLTKQQAAKLTARVPAPLYYADHPKSKRLRNKTNIVLRRMGSAELPESDTD</sequence>
<protein>
    <recommendedName>
        <fullName evidence="1">Biosynthetic peptidoglycan transglycosylase</fullName>
        <ecNumber evidence="1">2.4.99.28</ecNumber>
    </recommendedName>
    <alternativeName>
        <fullName evidence="1">Glycan polymerase</fullName>
    </alternativeName>
    <alternativeName>
        <fullName evidence="1">Peptidoglycan glycosyltransferase MtgA</fullName>
        <shortName evidence="1">PGT</shortName>
    </alternativeName>
</protein>
<accession>A1KVS7</accession>
<organism>
    <name type="scientific">Neisseria meningitidis serogroup C / serotype 2a (strain ATCC 700532 / DSM 15464 / FAM18)</name>
    <dbReference type="NCBI Taxonomy" id="272831"/>
    <lineage>
        <taxon>Bacteria</taxon>
        <taxon>Pseudomonadati</taxon>
        <taxon>Pseudomonadota</taxon>
        <taxon>Betaproteobacteria</taxon>
        <taxon>Neisseriales</taxon>
        <taxon>Neisseriaceae</taxon>
        <taxon>Neisseria</taxon>
    </lineage>
</organism>
<dbReference type="EC" id="2.4.99.28" evidence="1"/>
<dbReference type="EMBL" id="AM421808">
    <property type="protein sequence ID" value="CAM10982.1"/>
    <property type="molecule type" value="Genomic_DNA"/>
</dbReference>
<dbReference type="RefSeq" id="WP_002220301.1">
    <property type="nucleotide sequence ID" value="NC_008767.1"/>
</dbReference>
<dbReference type="SMR" id="A1KVS7"/>
<dbReference type="CAZy" id="GT51">
    <property type="family name" value="Glycosyltransferase Family 51"/>
</dbReference>
<dbReference type="KEGG" id="nmc:NMC1811"/>
<dbReference type="HOGENOM" id="CLU_006354_1_0_4"/>
<dbReference type="UniPathway" id="UPA00219"/>
<dbReference type="Proteomes" id="UP000002286">
    <property type="component" value="Chromosome"/>
</dbReference>
<dbReference type="GO" id="GO:0009274">
    <property type="term" value="C:peptidoglycan-based cell wall"/>
    <property type="evidence" value="ECO:0007669"/>
    <property type="project" value="InterPro"/>
</dbReference>
<dbReference type="GO" id="GO:0005886">
    <property type="term" value="C:plasma membrane"/>
    <property type="evidence" value="ECO:0007669"/>
    <property type="project" value="UniProtKB-SubCell"/>
</dbReference>
<dbReference type="GO" id="GO:0016763">
    <property type="term" value="F:pentosyltransferase activity"/>
    <property type="evidence" value="ECO:0007669"/>
    <property type="project" value="InterPro"/>
</dbReference>
<dbReference type="GO" id="GO:0008955">
    <property type="term" value="F:peptidoglycan glycosyltransferase activity"/>
    <property type="evidence" value="ECO:0007669"/>
    <property type="project" value="UniProtKB-UniRule"/>
</dbReference>
<dbReference type="GO" id="GO:0071555">
    <property type="term" value="P:cell wall organization"/>
    <property type="evidence" value="ECO:0007669"/>
    <property type="project" value="UniProtKB-KW"/>
</dbReference>
<dbReference type="GO" id="GO:0009252">
    <property type="term" value="P:peptidoglycan biosynthetic process"/>
    <property type="evidence" value="ECO:0007669"/>
    <property type="project" value="UniProtKB-UniRule"/>
</dbReference>
<dbReference type="GO" id="GO:0008360">
    <property type="term" value="P:regulation of cell shape"/>
    <property type="evidence" value="ECO:0007669"/>
    <property type="project" value="UniProtKB-KW"/>
</dbReference>
<dbReference type="Gene3D" id="1.10.3810.10">
    <property type="entry name" value="Biosynthetic peptidoglycan transglycosylase-like"/>
    <property type="match status" value="1"/>
</dbReference>
<dbReference type="HAMAP" id="MF_00766">
    <property type="entry name" value="PGT_MtgA"/>
    <property type="match status" value="1"/>
</dbReference>
<dbReference type="InterPro" id="IPR001264">
    <property type="entry name" value="Glyco_trans_51"/>
</dbReference>
<dbReference type="InterPro" id="IPR023346">
    <property type="entry name" value="Lysozyme-like_dom_sf"/>
</dbReference>
<dbReference type="InterPro" id="IPR036950">
    <property type="entry name" value="PBP_transglycosylase"/>
</dbReference>
<dbReference type="InterPro" id="IPR011812">
    <property type="entry name" value="Pep_trsgly"/>
</dbReference>
<dbReference type="NCBIfam" id="TIGR02070">
    <property type="entry name" value="mono_pep_trsgly"/>
    <property type="match status" value="1"/>
</dbReference>
<dbReference type="PANTHER" id="PTHR30400:SF0">
    <property type="entry name" value="BIOSYNTHETIC PEPTIDOGLYCAN TRANSGLYCOSYLASE"/>
    <property type="match status" value="1"/>
</dbReference>
<dbReference type="PANTHER" id="PTHR30400">
    <property type="entry name" value="MONOFUNCTIONAL BIOSYNTHETIC PEPTIDOGLYCAN TRANSGLYCOSYLASE"/>
    <property type="match status" value="1"/>
</dbReference>
<dbReference type="Pfam" id="PF00912">
    <property type="entry name" value="Transgly"/>
    <property type="match status" value="1"/>
</dbReference>
<dbReference type="SUPFAM" id="SSF53955">
    <property type="entry name" value="Lysozyme-like"/>
    <property type="match status" value="1"/>
</dbReference>
<name>MTGA_NEIMF</name>